<dbReference type="EMBL" id="CP001164">
    <property type="protein sequence ID" value="ACI36523.1"/>
    <property type="molecule type" value="Genomic_DNA"/>
</dbReference>
<dbReference type="RefSeq" id="WP_001295377.1">
    <property type="nucleotide sequence ID" value="NC_011353.1"/>
</dbReference>
<dbReference type="SMR" id="B5YQ96"/>
<dbReference type="GeneID" id="93779098"/>
<dbReference type="KEGG" id="ecf:ECH74115_4195"/>
<dbReference type="HOGENOM" id="CLU_097408_2_1_6"/>
<dbReference type="GO" id="GO:0005829">
    <property type="term" value="C:cytosol"/>
    <property type="evidence" value="ECO:0007669"/>
    <property type="project" value="TreeGrafter"/>
</dbReference>
<dbReference type="GO" id="GO:0005960">
    <property type="term" value="C:glycine cleavage complex"/>
    <property type="evidence" value="ECO:0007669"/>
    <property type="project" value="InterPro"/>
</dbReference>
<dbReference type="GO" id="GO:0019464">
    <property type="term" value="P:glycine decarboxylation via glycine cleavage system"/>
    <property type="evidence" value="ECO:0007669"/>
    <property type="project" value="UniProtKB-UniRule"/>
</dbReference>
<dbReference type="CDD" id="cd06848">
    <property type="entry name" value="GCS_H"/>
    <property type="match status" value="1"/>
</dbReference>
<dbReference type="FunFam" id="2.40.50.100:FF:000011">
    <property type="entry name" value="Glycine cleavage system H protein"/>
    <property type="match status" value="1"/>
</dbReference>
<dbReference type="Gene3D" id="2.40.50.100">
    <property type="match status" value="1"/>
</dbReference>
<dbReference type="HAMAP" id="MF_00272">
    <property type="entry name" value="GcvH"/>
    <property type="match status" value="1"/>
</dbReference>
<dbReference type="InterPro" id="IPR003016">
    <property type="entry name" value="2-oxoA_DH_lipoyl-BS"/>
</dbReference>
<dbReference type="InterPro" id="IPR000089">
    <property type="entry name" value="Biotin_lipoyl"/>
</dbReference>
<dbReference type="InterPro" id="IPR002930">
    <property type="entry name" value="GCV_H"/>
</dbReference>
<dbReference type="InterPro" id="IPR033753">
    <property type="entry name" value="GCV_H/Fam206"/>
</dbReference>
<dbReference type="InterPro" id="IPR017453">
    <property type="entry name" value="GCV_H_sub"/>
</dbReference>
<dbReference type="InterPro" id="IPR011053">
    <property type="entry name" value="Single_hybrid_motif"/>
</dbReference>
<dbReference type="NCBIfam" id="TIGR00527">
    <property type="entry name" value="gcvH"/>
    <property type="match status" value="1"/>
</dbReference>
<dbReference type="NCBIfam" id="NF002270">
    <property type="entry name" value="PRK01202.1"/>
    <property type="match status" value="1"/>
</dbReference>
<dbReference type="PANTHER" id="PTHR11715">
    <property type="entry name" value="GLYCINE CLEAVAGE SYSTEM H PROTEIN"/>
    <property type="match status" value="1"/>
</dbReference>
<dbReference type="PANTHER" id="PTHR11715:SF3">
    <property type="entry name" value="GLYCINE CLEAVAGE SYSTEM H PROTEIN-RELATED"/>
    <property type="match status" value="1"/>
</dbReference>
<dbReference type="Pfam" id="PF01597">
    <property type="entry name" value="GCV_H"/>
    <property type="match status" value="1"/>
</dbReference>
<dbReference type="SUPFAM" id="SSF51230">
    <property type="entry name" value="Single hybrid motif"/>
    <property type="match status" value="1"/>
</dbReference>
<dbReference type="PROSITE" id="PS50968">
    <property type="entry name" value="BIOTINYL_LIPOYL"/>
    <property type="match status" value="1"/>
</dbReference>
<dbReference type="PROSITE" id="PS00189">
    <property type="entry name" value="LIPOYL"/>
    <property type="match status" value="1"/>
</dbReference>
<proteinExistence type="inferred from homology"/>
<reference key="1">
    <citation type="journal article" date="2011" name="Proc. Natl. Acad. Sci. U.S.A.">
        <title>Genomic anatomy of Escherichia coli O157:H7 outbreaks.</title>
        <authorList>
            <person name="Eppinger M."/>
            <person name="Mammel M.K."/>
            <person name="Leclerc J.E."/>
            <person name="Ravel J."/>
            <person name="Cebula T.A."/>
        </authorList>
    </citation>
    <scope>NUCLEOTIDE SEQUENCE [LARGE SCALE GENOMIC DNA]</scope>
    <source>
        <strain>EC4115 / EHEC</strain>
    </source>
</reference>
<comment type="function">
    <text evidence="1">The glycine cleavage system catalyzes the degradation of glycine. The H protein shuttles the methylamine group of glycine from the P protein to the T protein.</text>
</comment>
<comment type="cofactor">
    <cofactor evidence="1">
        <name>(R)-lipoate</name>
        <dbReference type="ChEBI" id="CHEBI:83088"/>
    </cofactor>
    <text evidence="1">Binds 1 lipoyl cofactor covalently.</text>
</comment>
<comment type="subunit">
    <text evidence="1">The glycine cleavage system is composed of four proteins: P, T, L and H.</text>
</comment>
<comment type="similarity">
    <text evidence="1">Belongs to the GcvH family.</text>
</comment>
<protein>
    <recommendedName>
        <fullName evidence="1">Glycine cleavage system H protein</fullName>
    </recommendedName>
</protein>
<accession>B5YQ96</accession>
<keyword id="KW-0450">Lipoyl</keyword>
<sequence length="129" mass="13811">MSNVPAELKYSKEHEWLRKEADGTYTVGITEHAQELLGDMVFVDLPEVGATVSAGDDCAVAESVKAASDIYAPVSGEIVAVNDALSDSPELVNSEPYAGGWIFKIKASDESELESLLDATAYEALLEDE</sequence>
<organism>
    <name type="scientific">Escherichia coli O157:H7 (strain EC4115 / EHEC)</name>
    <dbReference type="NCBI Taxonomy" id="444450"/>
    <lineage>
        <taxon>Bacteria</taxon>
        <taxon>Pseudomonadati</taxon>
        <taxon>Pseudomonadota</taxon>
        <taxon>Gammaproteobacteria</taxon>
        <taxon>Enterobacterales</taxon>
        <taxon>Enterobacteriaceae</taxon>
        <taxon>Escherichia</taxon>
    </lineage>
</organism>
<feature type="chain" id="PRO_1000114517" description="Glycine cleavage system H protein">
    <location>
        <begin position="1"/>
        <end position="129"/>
    </location>
</feature>
<feature type="domain" description="Lipoyl-binding" evidence="2">
    <location>
        <begin position="24"/>
        <end position="106"/>
    </location>
</feature>
<feature type="modified residue" description="N6-lipoyllysine" evidence="1">
    <location>
        <position position="65"/>
    </location>
</feature>
<name>GCSH_ECO5E</name>
<gene>
    <name evidence="1" type="primary">gcvH</name>
    <name type="ordered locus">ECH74115_4195</name>
</gene>
<evidence type="ECO:0000255" key="1">
    <source>
        <dbReference type="HAMAP-Rule" id="MF_00272"/>
    </source>
</evidence>
<evidence type="ECO:0000255" key="2">
    <source>
        <dbReference type="PROSITE-ProRule" id="PRU01066"/>
    </source>
</evidence>